<keyword id="KW-0255">Endonuclease</keyword>
<keyword id="KW-0378">Hydrolase</keyword>
<keyword id="KW-0540">Nuclease</keyword>
<keyword id="KW-0694">RNA-binding</keyword>
<keyword id="KW-0819">tRNA processing</keyword>
<evidence type="ECO:0000255" key="1">
    <source>
        <dbReference type="HAMAP-Rule" id="MF_00227"/>
    </source>
</evidence>
<organism>
    <name type="scientific">Rickettsia bellii (strain RML369-C)</name>
    <dbReference type="NCBI Taxonomy" id="336407"/>
    <lineage>
        <taxon>Bacteria</taxon>
        <taxon>Pseudomonadati</taxon>
        <taxon>Pseudomonadota</taxon>
        <taxon>Alphaproteobacteria</taxon>
        <taxon>Rickettsiales</taxon>
        <taxon>Rickettsiaceae</taxon>
        <taxon>Rickettsieae</taxon>
        <taxon>Rickettsia</taxon>
        <taxon>belli group</taxon>
    </lineage>
</organism>
<reference key="1">
    <citation type="journal article" date="2006" name="PLoS Genet.">
        <title>Genome sequence of Rickettsia bellii illuminates the role of amoebae in gene exchanges between intracellular pathogens.</title>
        <authorList>
            <person name="Ogata H."/>
            <person name="La Scola B."/>
            <person name="Audic S."/>
            <person name="Renesto P."/>
            <person name="Blanc G."/>
            <person name="Robert C."/>
            <person name="Fournier P.-E."/>
            <person name="Claverie J.-M."/>
            <person name="Raoult D."/>
        </authorList>
    </citation>
    <scope>NUCLEOTIDE SEQUENCE [LARGE SCALE GENOMIC DNA]</scope>
    <source>
        <strain>RML369-C</strain>
    </source>
</reference>
<dbReference type="EC" id="3.1.26.5" evidence="1"/>
<dbReference type="EMBL" id="CP000087">
    <property type="protein sequence ID" value="ABE04948.1"/>
    <property type="molecule type" value="Genomic_DNA"/>
</dbReference>
<dbReference type="RefSeq" id="WP_011477533.1">
    <property type="nucleotide sequence ID" value="NC_007940.1"/>
</dbReference>
<dbReference type="SMR" id="Q1RI66"/>
<dbReference type="KEGG" id="rbe:RBE_0867"/>
<dbReference type="eggNOG" id="COG0594">
    <property type="taxonomic scope" value="Bacteria"/>
</dbReference>
<dbReference type="HOGENOM" id="CLU_2047938_0_0_5"/>
<dbReference type="OrthoDB" id="7160815at2"/>
<dbReference type="Proteomes" id="UP000001951">
    <property type="component" value="Chromosome"/>
</dbReference>
<dbReference type="GO" id="GO:0030677">
    <property type="term" value="C:ribonuclease P complex"/>
    <property type="evidence" value="ECO:0007669"/>
    <property type="project" value="TreeGrafter"/>
</dbReference>
<dbReference type="GO" id="GO:0042781">
    <property type="term" value="F:3'-tRNA processing endoribonuclease activity"/>
    <property type="evidence" value="ECO:0007669"/>
    <property type="project" value="TreeGrafter"/>
</dbReference>
<dbReference type="GO" id="GO:0004526">
    <property type="term" value="F:ribonuclease P activity"/>
    <property type="evidence" value="ECO:0007669"/>
    <property type="project" value="UniProtKB-UniRule"/>
</dbReference>
<dbReference type="GO" id="GO:0000049">
    <property type="term" value="F:tRNA binding"/>
    <property type="evidence" value="ECO:0007669"/>
    <property type="project" value="UniProtKB-UniRule"/>
</dbReference>
<dbReference type="GO" id="GO:0001682">
    <property type="term" value="P:tRNA 5'-leader removal"/>
    <property type="evidence" value="ECO:0007669"/>
    <property type="project" value="UniProtKB-UniRule"/>
</dbReference>
<dbReference type="Gene3D" id="3.30.230.10">
    <property type="match status" value="1"/>
</dbReference>
<dbReference type="HAMAP" id="MF_00227">
    <property type="entry name" value="RNase_P"/>
    <property type="match status" value="1"/>
</dbReference>
<dbReference type="InterPro" id="IPR020568">
    <property type="entry name" value="Ribosomal_Su5_D2-typ_SF"/>
</dbReference>
<dbReference type="InterPro" id="IPR014721">
    <property type="entry name" value="Ribsml_uS5_D2-typ_fold_subgr"/>
</dbReference>
<dbReference type="InterPro" id="IPR000100">
    <property type="entry name" value="RNase_P"/>
</dbReference>
<dbReference type="InterPro" id="IPR020539">
    <property type="entry name" value="RNase_P_CS"/>
</dbReference>
<dbReference type="NCBIfam" id="TIGR00188">
    <property type="entry name" value="rnpA"/>
    <property type="match status" value="1"/>
</dbReference>
<dbReference type="PANTHER" id="PTHR33992">
    <property type="entry name" value="RIBONUCLEASE P PROTEIN COMPONENT"/>
    <property type="match status" value="1"/>
</dbReference>
<dbReference type="PANTHER" id="PTHR33992:SF1">
    <property type="entry name" value="RIBONUCLEASE P PROTEIN COMPONENT"/>
    <property type="match status" value="1"/>
</dbReference>
<dbReference type="Pfam" id="PF00825">
    <property type="entry name" value="Ribonuclease_P"/>
    <property type="match status" value="1"/>
</dbReference>
<dbReference type="SUPFAM" id="SSF54211">
    <property type="entry name" value="Ribosomal protein S5 domain 2-like"/>
    <property type="match status" value="1"/>
</dbReference>
<dbReference type="PROSITE" id="PS00648">
    <property type="entry name" value="RIBONUCLEASE_P"/>
    <property type="match status" value="1"/>
</dbReference>
<feature type="chain" id="PRO_0000274855" description="Ribonuclease P protein component">
    <location>
        <begin position="1"/>
        <end position="120"/>
    </location>
</feature>
<comment type="function">
    <text evidence="1">RNaseP catalyzes the removal of the 5'-leader sequence from pre-tRNA to produce the mature 5'-terminus. It can also cleave other RNA substrates such as 4.5S RNA. The protein component plays an auxiliary but essential role in vivo by binding to the 5'-leader sequence and broadening the substrate specificity of the ribozyme.</text>
</comment>
<comment type="catalytic activity">
    <reaction evidence="1">
        <text>Endonucleolytic cleavage of RNA, removing 5'-extranucleotides from tRNA precursor.</text>
        <dbReference type="EC" id="3.1.26.5"/>
    </reaction>
</comment>
<comment type="subunit">
    <text evidence="1">Consists of a catalytic RNA component (M1 or rnpB) and a protein subunit.</text>
</comment>
<comment type="similarity">
    <text evidence="1">Belongs to the RnpA family.</text>
</comment>
<accession>Q1RI66</accession>
<sequence length="120" mass="14145">MFITSLKNQKEFELINKLGKKFHEKYFILVIAKNIPKIFLESKYNIFLGIKVSKKLNKKAVVRNKIKRRIKHLIRLICNNSNLKKLAMIIIPRKGFDTADFSVLNHELSKAILDFYNPKK</sequence>
<protein>
    <recommendedName>
        <fullName evidence="1">Ribonuclease P protein component</fullName>
        <shortName evidence="1">RNase P protein</shortName>
        <shortName evidence="1">RNaseP protein</shortName>
        <ecNumber evidence="1">3.1.26.5</ecNumber>
    </recommendedName>
    <alternativeName>
        <fullName evidence="1">Protein C5</fullName>
    </alternativeName>
</protein>
<proteinExistence type="inferred from homology"/>
<gene>
    <name evidence="1" type="primary">rnpA</name>
    <name type="ordered locus">RBE_0867</name>
</gene>
<name>RNPA_RICBR</name>